<gene>
    <name evidence="1" type="primary">dtd</name>
    <name type="ordered locus">Hhal_1095</name>
</gene>
<sequence length="154" mass="16116">MITVIQRTGSARVRVGGEVVGEIERGLVALVCAVHGDGSAQAQRLAERVLGYRVFPDAEGRMNGSALDLGCGVLAVPQFTLAADTRKGMRPSFGPAADPQTGQALFETFLEALRERATGPVASGVFGADMQVELVNDGPVTFWLEAPPRPAGPV</sequence>
<name>DTD_HALHL</name>
<evidence type="ECO:0000255" key="1">
    <source>
        <dbReference type="HAMAP-Rule" id="MF_00518"/>
    </source>
</evidence>
<keyword id="KW-0963">Cytoplasm</keyword>
<keyword id="KW-0378">Hydrolase</keyword>
<keyword id="KW-1185">Reference proteome</keyword>
<keyword id="KW-0694">RNA-binding</keyword>
<keyword id="KW-0820">tRNA-binding</keyword>
<dbReference type="EC" id="3.1.1.96" evidence="1"/>
<dbReference type="EMBL" id="CP000544">
    <property type="protein sequence ID" value="ABM61871.1"/>
    <property type="molecule type" value="Genomic_DNA"/>
</dbReference>
<dbReference type="RefSeq" id="WP_011813894.1">
    <property type="nucleotide sequence ID" value="NC_008789.1"/>
</dbReference>
<dbReference type="SMR" id="A1WW09"/>
<dbReference type="STRING" id="349124.Hhal_1095"/>
<dbReference type="KEGG" id="hha:Hhal_1095"/>
<dbReference type="eggNOG" id="COG1490">
    <property type="taxonomic scope" value="Bacteria"/>
</dbReference>
<dbReference type="HOGENOM" id="CLU_076901_1_0_6"/>
<dbReference type="OrthoDB" id="9801395at2"/>
<dbReference type="Proteomes" id="UP000000647">
    <property type="component" value="Chromosome"/>
</dbReference>
<dbReference type="GO" id="GO:0005737">
    <property type="term" value="C:cytoplasm"/>
    <property type="evidence" value="ECO:0007669"/>
    <property type="project" value="UniProtKB-SubCell"/>
</dbReference>
<dbReference type="GO" id="GO:0051500">
    <property type="term" value="F:D-tyrosyl-tRNA(Tyr) deacylase activity"/>
    <property type="evidence" value="ECO:0007669"/>
    <property type="project" value="TreeGrafter"/>
</dbReference>
<dbReference type="GO" id="GO:0106026">
    <property type="term" value="F:Gly-tRNA(Ala) deacylase activity"/>
    <property type="evidence" value="ECO:0007669"/>
    <property type="project" value="UniProtKB-UniRule"/>
</dbReference>
<dbReference type="GO" id="GO:0043908">
    <property type="term" value="F:Ser(Gly)-tRNA(Ala) hydrolase activity"/>
    <property type="evidence" value="ECO:0007669"/>
    <property type="project" value="UniProtKB-UniRule"/>
</dbReference>
<dbReference type="GO" id="GO:0000049">
    <property type="term" value="F:tRNA binding"/>
    <property type="evidence" value="ECO:0007669"/>
    <property type="project" value="UniProtKB-UniRule"/>
</dbReference>
<dbReference type="GO" id="GO:0019478">
    <property type="term" value="P:D-amino acid catabolic process"/>
    <property type="evidence" value="ECO:0007669"/>
    <property type="project" value="UniProtKB-UniRule"/>
</dbReference>
<dbReference type="FunFam" id="3.50.80.10:FF:000001">
    <property type="entry name" value="D-aminoacyl-tRNA deacylase"/>
    <property type="match status" value="1"/>
</dbReference>
<dbReference type="Gene3D" id="3.50.80.10">
    <property type="entry name" value="D-tyrosyl-tRNA(Tyr) deacylase"/>
    <property type="match status" value="1"/>
</dbReference>
<dbReference type="HAMAP" id="MF_00518">
    <property type="entry name" value="Deacylase_Dtd"/>
    <property type="match status" value="1"/>
</dbReference>
<dbReference type="InterPro" id="IPR003732">
    <property type="entry name" value="Daa-tRNA_deacyls_DTD"/>
</dbReference>
<dbReference type="InterPro" id="IPR023509">
    <property type="entry name" value="DTD-like_sf"/>
</dbReference>
<dbReference type="NCBIfam" id="TIGR00256">
    <property type="entry name" value="D-aminoacyl-tRNA deacylase"/>
    <property type="match status" value="1"/>
</dbReference>
<dbReference type="PANTHER" id="PTHR10472:SF5">
    <property type="entry name" value="D-AMINOACYL-TRNA DEACYLASE 1"/>
    <property type="match status" value="1"/>
</dbReference>
<dbReference type="PANTHER" id="PTHR10472">
    <property type="entry name" value="D-TYROSYL-TRNA TYR DEACYLASE"/>
    <property type="match status" value="1"/>
</dbReference>
<dbReference type="Pfam" id="PF02580">
    <property type="entry name" value="Tyr_Deacylase"/>
    <property type="match status" value="1"/>
</dbReference>
<dbReference type="SUPFAM" id="SSF69500">
    <property type="entry name" value="DTD-like"/>
    <property type="match status" value="1"/>
</dbReference>
<protein>
    <recommendedName>
        <fullName evidence="1">D-aminoacyl-tRNA deacylase</fullName>
        <shortName evidence="1">DTD</shortName>
        <ecNumber evidence="1">3.1.1.96</ecNumber>
    </recommendedName>
    <alternativeName>
        <fullName evidence="1">Gly-tRNA(Ala) deacylase</fullName>
    </alternativeName>
</protein>
<proteinExistence type="inferred from homology"/>
<feature type="chain" id="PRO_1000127541" description="D-aminoacyl-tRNA deacylase">
    <location>
        <begin position="1"/>
        <end position="154"/>
    </location>
</feature>
<feature type="short sequence motif" description="Gly-cisPro motif, important for rejection of L-amino acids" evidence="1">
    <location>
        <begin position="138"/>
        <end position="139"/>
    </location>
</feature>
<accession>A1WW09</accession>
<reference key="1">
    <citation type="submission" date="2006-12" db="EMBL/GenBank/DDBJ databases">
        <title>Complete sequence of Halorhodospira halophila SL1.</title>
        <authorList>
            <consortium name="US DOE Joint Genome Institute"/>
            <person name="Copeland A."/>
            <person name="Lucas S."/>
            <person name="Lapidus A."/>
            <person name="Barry K."/>
            <person name="Detter J.C."/>
            <person name="Glavina del Rio T."/>
            <person name="Hammon N."/>
            <person name="Israni S."/>
            <person name="Dalin E."/>
            <person name="Tice H."/>
            <person name="Pitluck S."/>
            <person name="Saunders E."/>
            <person name="Brettin T."/>
            <person name="Bruce D."/>
            <person name="Han C."/>
            <person name="Tapia R."/>
            <person name="Schmutz J."/>
            <person name="Larimer F."/>
            <person name="Land M."/>
            <person name="Hauser L."/>
            <person name="Kyrpides N."/>
            <person name="Mikhailova N."/>
            <person name="Hoff W."/>
            <person name="Richardson P."/>
        </authorList>
    </citation>
    <scope>NUCLEOTIDE SEQUENCE [LARGE SCALE GENOMIC DNA]</scope>
    <source>
        <strain>DSM 244 / SL1</strain>
    </source>
</reference>
<organism>
    <name type="scientific">Halorhodospira halophila (strain DSM 244 / SL1)</name>
    <name type="common">Ectothiorhodospira halophila (strain DSM 244 / SL1)</name>
    <dbReference type="NCBI Taxonomy" id="349124"/>
    <lineage>
        <taxon>Bacteria</taxon>
        <taxon>Pseudomonadati</taxon>
        <taxon>Pseudomonadota</taxon>
        <taxon>Gammaproteobacteria</taxon>
        <taxon>Chromatiales</taxon>
        <taxon>Ectothiorhodospiraceae</taxon>
        <taxon>Halorhodospira</taxon>
    </lineage>
</organism>
<comment type="function">
    <text evidence="1">An aminoacyl-tRNA editing enzyme that deacylates mischarged D-aminoacyl-tRNAs. Also deacylates mischarged glycyl-tRNA(Ala), protecting cells against glycine mischarging by AlaRS. Acts via tRNA-based rather than protein-based catalysis; rejects L-amino acids rather than detecting D-amino acids in the active site. By recycling D-aminoacyl-tRNA to D-amino acids and free tRNA molecules, this enzyme counteracts the toxicity associated with the formation of D-aminoacyl-tRNA entities in vivo and helps enforce protein L-homochirality.</text>
</comment>
<comment type="catalytic activity">
    <reaction evidence="1">
        <text>glycyl-tRNA(Ala) + H2O = tRNA(Ala) + glycine + H(+)</text>
        <dbReference type="Rhea" id="RHEA:53744"/>
        <dbReference type="Rhea" id="RHEA-COMP:9657"/>
        <dbReference type="Rhea" id="RHEA-COMP:13640"/>
        <dbReference type="ChEBI" id="CHEBI:15377"/>
        <dbReference type="ChEBI" id="CHEBI:15378"/>
        <dbReference type="ChEBI" id="CHEBI:57305"/>
        <dbReference type="ChEBI" id="CHEBI:78442"/>
        <dbReference type="ChEBI" id="CHEBI:78522"/>
        <dbReference type="EC" id="3.1.1.96"/>
    </reaction>
</comment>
<comment type="catalytic activity">
    <reaction evidence="1">
        <text>a D-aminoacyl-tRNA + H2O = a tRNA + a D-alpha-amino acid + H(+)</text>
        <dbReference type="Rhea" id="RHEA:13953"/>
        <dbReference type="Rhea" id="RHEA-COMP:10123"/>
        <dbReference type="Rhea" id="RHEA-COMP:10124"/>
        <dbReference type="ChEBI" id="CHEBI:15377"/>
        <dbReference type="ChEBI" id="CHEBI:15378"/>
        <dbReference type="ChEBI" id="CHEBI:59871"/>
        <dbReference type="ChEBI" id="CHEBI:78442"/>
        <dbReference type="ChEBI" id="CHEBI:79333"/>
        <dbReference type="EC" id="3.1.1.96"/>
    </reaction>
</comment>
<comment type="subunit">
    <text evidence="1">Homodimer.</text>
</comment>
<comment type="subcellular location">
    <subcellularLocation>
        <location evidence="1">Cytoplasm</location>
    </subcellularLocation>
</comment>
<comment type="domain">
    <text evidence="1">A Gly-cisPro motif from one monomer fits into the active site of the other monomer to allow specific chiral rejection of L-amino acids.</text>
</comment>
<comment type="similarity">
    <text evidence="1">Belongs to the DTD family.</text>
</comment>